<protein>
    <recommendedName>
        <fullName>E3 ubiquitin-protein ligase TRIM39</fullName>
        <ecNumber>2.3.2.27</ecNumber>
    </recommendedName>
    <alternativeName>
        <fullName>RING finger protein 23</fullName>
    </alternativeName>
    <alternativeName>
        <fullName evidence="6">RING-type E3 ubiquitin transferase TRIM39</fullName>
    </alternativeName>
    <alternativeName>
        <fullName>Tripartite motif-containing protein 39</fullName>
    </alternativeName>
</protein>
<keyword id="KW-0053">Apoptosis</keyword>
<keyword id="KW-0175">Coiled coil</keyword>
<keyword id="KW-0963">Cytoplasm</keyword>
<keyword id="KW-0479">Metal-binding</keyword>
<keyword id="KW-0496">Mitochondrion</keyword>
<keyword id="KW-0539">Nucleus</keyword>
<keyword id="KW-1185">Reference proteome</keyword>
<keyword id="KW-0808">Transferase</keyword>
<keyword id="KW-0832">Ubl conjugation</keyword>
<keyword id="KW-0833">Ubl conjugation pathway</keyword>
<keyword id="KW-0862">Zinc</keyword>
<keyword id="KW-0863">Zinc-finger</keyword>
<proteinExistence type="inferred from homology"/>
<feature type="chain" id="PRO_0000056259" description="E3 ubiquitin-protein ligase TRIM39">
    <location>
        <begin position="1"/>
        <end position="488"/>
    </location>
</feature>
<feature type="domain" description="B30.2/SPRY" evidence="5">
    <location>
        <begin position="289"/>
        <end position="484"/>
    </location>
</feature>
<feature type="zinc finger region" description="RING-type" evidence="4">
    <location>
        <begin position="29"/>
        <end position="70"/>
    </location>
</feature>
<feature type="zinc finger region" description="B box-type" evidence="3">
    <location>
        <begin position="102"/>
        <end position="143"/>
    </location>
</feature>
<feature type="region of interest" description="Interaction with CDKN1A" evidence="1">
    <location>
        <begin position="268"/>
        <end position="307"/>
    </location>
</feature>
<feature type="region of interest" description="Interaction with CDKN1A" evidence="1">
    <location>
        <begin position="359"/>
        <end position="488"/>
    </location>
</feature>
<feature type="coiled-coil region" evidence="2">
    <location>
        <begin position="181"/>
        <end position="250"/>
    </location>
</feature>
<feature type="binding site" evidence="3">
    <location>
        <position position="107"/>
    </location>
    <ligand>
        <name>Zn(2+)</name>
        <dbReference type="ChEBI" id="CHEBI:29105"/>
    </ligand>
</feature>
<feature type="binding site" evidence="3">
    <location>
        <position position="110"/>
    </location>
    <ligand>
        <name>Zn(2+)</name>
        <dbReference type="ChEBI" id="CHEBI:29105"/>
    </ligand>
</feature>
<feature type="binding site" evidence="3">
    <location>
        <position position="129"/>
    </location>
    <ligand>
        <name>Zn(2+)</name>
        <dbReference type="ChEBI" id="CHEBI:29105"/>
    </ligand>
</feature>
<feature type="binding site" evidence="3">
    <location>
        <position position="135"/>
    </location>
    <ligand>
        <name>Zn(2+)</name>
        <dbReference type="ChEBI" id="CHEBI:29105"/>
    </ligand>
</feature>
<organism>
    <name type="scientific">Rattus norvegicus</name>
    <name type="common">Rat</name>
    <dbReference type="NCBI Taxonomy" id="10116"/>
    <lineage>
        <taxon>Eukaryota</taxon>
        <taxon>Metazoa</taxon>
        <taxon>Chordata</taxon>
        <taxon>Craniata</taxon>
        <taxon>Vertebrata</taxon>
        <taxon>Euteleostomi</taxon>
        <taxon>Mammalia</taxon>
        <taxon>Eutheria</taxon>
        <taxon>Euarchontoglires</taxon>
        <taxon>Glires</taxon>
        <taxon>Rodentia</taxon>
        <taxon>Myomorpha</taxon>
        <taxon>Muroidea</taxon>
        <taxon>Muridae</taxon>
        <taxon>Murinae</taxon>
        <taxon>Rattus</taxon>
    </lineage>
</organism>
<sequence length="488" mass="56394">MAETSLLEAGASAASTAAALENLQVEASCSVCLEYLKEPVIIECGHNFCKACITRWWEDLERDFPCPVCRKTSRYRSLRPNRQLGSMVEIAKQLQTVKRKIRDESLCSQHHEPLSLFCYEDQEAVCLICAISHTHRAHTVVPMDDATQEYKEKLQKCLEPLEQKLQEITCCKASEERKPGELKRLVESRRQQILKEFEELHRRLDEEQQTLLSRLEEEEQDILQRLRENAAHLGDRRRDLAHLAAEVEGKCLQSGFEMLKDVKSTLEKCEKVKTMEVTSVSIELEKNFSHFPRQYFALRKILKQLIADVTLDPETAHPNLVLSEDRKSVKFVETRLRDLPDTPQRFTFYPCVLATEGFTSGRHYWEVEVGDKTHWAVGVCRDSVSRKGELTPLPETGYWRVRLWNGDKYAATTTPFTPLHIKVKPKRVGIFLDYEAGTLSFYNVTDRSHIYTFTDTFTEKLWPLFYPGIRAGRKNAAPLTIRPPTDWE</sequence>
<evidence type="ECO:0000250" key="1">
    <source>
        <dbReference type="UniProtKB" id="Q9HCM9"/>
    </source>
</evidence>
<evidence type="ECO:0000255" key="2"/>
<evidence type="ECO:0000255" key="3">
    <source>
        <dbReference type="PROSITE-ProRule" id="PRU00024"/>
    </source>
</evidence>
<evidence type="ECO:0000255" key="4">
    <source>
        <dbReference type="PROSITE-ProRule" id="PRU00175"/>
    </source>
</evidence>
<evidence type="ECO:0000255" key="5">
    <source>
        <dbReference type="PROSITE-ProRule" id="PRU00548"/>
    </source>
</evidence>
<evidence type="ECO:0000305" key="6"/>
<name>TRI39_RAT</name>
<reference key="1">
    <citation type="journal article" date="2004" name="Genome Res.">
        <title>The genomic sequence and comparative analysis of the rat major histocompatibility complex.</title>
        <authorList>
            <person name="Hurt P."/>
            <person name="Walter L."/>
            <person name="Sudbrak R."/>
            <person name="Klages S."/>
            <person name="Mueller I."/>
            <person name="Shiina T."/>
            <person name="Inoko H."/>
            <person name="Lehrach H."/>
            <person name="Guenther E."/>
            <person name="Reinhardt R."/>
            <person name="Himmelbauer H."/>
        </authorList>
    </citation>
    <scope>NUCLEOTIDE SEQUENCE [LARGE SCALE GENOMIC DNA]</scope>
    <source>
        <strain>Brown Norway</strain>
    </source>
</reference>
<gene>
    <name type="primary">Trim39</name>
    <name type="synonym">Rnf23</name>
</gene>
<comment type="function">
    <text evidence="1">E3 ubiquitin-protein ligase (By similarity). May facilitate apoptosis by inhibiting APC/C-Cdh1-mediated poly-ubiquitination and subsequent proteasome-mediated degradation of the pro-apoptotic protein MOAP1 (By similarity). Regulates the G1/S transition of the cell cycle and DNA damage-induced G2 arrest by stabilizing CDKN1A/p21 (By similarity). Positively regulates CDKN1A/p21 stability by competing with DTL for CDKN1A/p21 binding, therefore disrupting DCX(DTL) E3 ubiquitin ligase complex-mediated CDKN1A/p21 ubiquitination and degradation (By similarity).</text>
</comment>
<comment type="catalytic activity">
    <reaction>
        <text>S-ubiquitinyl-[E2 ubiquitin-conjugating enzyme]-L-cysteine + [acceptor protein]-L-lysine = [E2 ubiquitin-conjugating enzyme]-L-cysteine + N(6)-ubiquitinyl-[acceptor protein]-L-lysine.</text>
        <dbReference type="EC" id="2.3.2.27"/>
    </reaction>
</comment>
<comment type="pathway">
    <text>Protein modification; protein ubiquitination.</text>
</comment>
<comment type="subunit">
    <text evidence="1">Interacts with MOAP1 (By similarity). Interacts with CDKN1A (By similarity).</text>
</comment>
<comment type="subcellular location">
    <subcellularLocation>
        <location evidence="1">Cytoplasm</location>
        <location evidence="1">Cytosol</location>
    </subcellularLocation>
    <subcellularLocation>
        <location evidence="1">Mitochondrion</location>
    </subcellularLocation>
    <subcellularLocation>
        <location evidence="1">Nucleus</location>
    </subcellularLocation>
    <text evidence="1">Found predominantly in the cytosol. Partial shift from the cytosol to the mitochondria when colocalized with MOAP1. Colocalizes with CDKN1A in the nucleus.</text>
</comment>
<comment type="PTM">
    <text evidence="1">Autoubiquitinated.</text>
</comment>
<comment type="similarity">
    <text evidence="6">Belongs to the TRIM/RBCC family.</text>
</comment>
<accession>Q6MFZ5</accession>
<dbReference type="EC" id="2.3.2.27"/>
<dbReference type="EMBL" id="BX883050">
    <property type="protein sequence ID" value="CAE84052.1"/>
    <property type="molecule type" value="Genomic_DNA"/>
</dbReference>
<dbReference type="RefSeq" id="NP_998727.1">
    <property type="nucleotide sequence ID" value="NM_213562.1"/>
</dbReference>
<dbReference type="BMRB" id="Q6MFZ5"/>
<dbReference type="SMR" id="Q6MFZ5"/>
<dbReference type="FunCoup" id="Q6MFZ5">
    <property type="interactions" value="984"/>
</dbReference>
<dbReference type="STRING" id="10116.ENSRNOP00000001021"/>
<dbReference type="PhosphoSitePlus" id="Q6MFZ5"/>
<dbReference type="PaxDb" id="10116-ENSRNOP00000001021"/>
<dbReference type="GeneID" id="309591"/>
<dbReference type="KEGG" id="rno:309591"/>
<dbReference type="UCSC" id="RGD:1303115">
    <property type="organism name" value="rat"/>
</dbReference>
<dbReference type="AGR" id="RGD:1303115"/>
<dbReference type="CTD" id="56658"/>
<dbReference type="RGD" id="1303115">
    <property type="gene designation" value="Trim39"/>
</dbReference>
<dbReference type="VEuPathDB" id="HostDB:ENSRNOG00000000785"/>
<dbReference type="eggNOG" id="KOG2177">
    <property type="taxonomic scope" value="Eukaryota"/>
</dbReference>
<dbReference type="InParanoid" id="Q6MFZ5"/>
<dbReference type="PhylomeDB" id="Q6MFZ5"/>
<dbReference type="TreeFam" id="TF342569"/>
<dbReference type="Reactome" id="R-RNO-983168">
    <property type="pathway name" value="Antigen processing: Ubiquitination &amp; Proteasome degradation"/>
</dbReference>
<dbReference type="UniPathway" id="UPA00143"/>
<dbReference type="PRO" id="PR:Q6MFZ5"/>
<dbReference type="Proteomes" id="UP000002494">
    <property type="component" value="Chromosome 20"/>
</dbReference>
<dbReference type="Bgee" id="ENSRNOG00000000785">
    <property type="expression patterns" value="Expressed in thymus and 19 other cell types or tissues"/>
</dbReference>
<dbReference type="ExpressionAtlas" id="Q6MFZ5">
    <property type="expression patterns" value="baseline and differential"/>
</dbReference>
<dbReference type="GO" id="GO:0005737">
    <property type="term" value="C:cytoplasm"/>
    <property type="evidence" value="ECO:0000318"/>
    <property type="project" value="GO_Central"/>
</dbReference>
<dbReference type="GO" id="GO:0005829">
    <property type="term" value="C:cytosol"/>
    <property type="evidence" value="ECO:0000266"/>
    <property type="project" value="RGD"/>
</dbReference>
<dbReference type="GO" id="GO:0005739">
    <property type="term" value="C:mitochondrion"/>
    <property type="evidence" value="ECO:0000266"/>
    <property type="project" value="RGD"/>
</dbReference>
<dbReference type="GO" id="GO:0005634">
    <property type="term" value="C:nucleus"/>
    <property type="evidence" value="ECO:0000250"/>
    <property type="project" value="UniProtKB"/>
</dbReference>
<dbReference type="GO" id="GO:0042802">
    <property type="term" value="F:identical protein binding"/>
    <property type="evidence" value="ECO:0000266"/>
    <property type="project" value="RGD"/>
</dbReference>
<dbReference type="GO" id="GO:0061630">
    <property type="term" value="F:ubiquitin protein ligase activity"/>
    <property type="evidence" value="ECO:0000318"/>
    <property type="project" value="GO_Central"/>
</dbReference>
<dbReference type="GO" id="GO:0008270">
    <property type="term" value="F:zinc ion binding"/>
    <property type="evidence" value="ECO:0007669"/>
    <property type="project" value="UniProtKB-KW"/>
</dbReference>
<dbReference type="GO" id="GO:0006915">
    <property type="term" value="P:apoptotic process"/>
    <property type="evidence" value="ECO:0007669"/>
    <property type="project" value="UniProtKB-KW"/>
</dbReference>
<dbReference type="GO" id="GO:0045087">
    <property type="term" value="P:innate immune response"/>
    <property type="evidence" value="ECO:0000318"/>
    <property type="project" value="GO_Central"/>
</dbReference>
<dbReference type="GO" id="GO:0007095">
    <property type="term" value="P:mitotic G2 DNA damage checkpoint signaling"/>
    <property type="evidence" value="ECO:0000250"/>
    <property type="project" value="UniProtKB"/>
</dbReference>
<dbReference type="GO" id="GO:0043124">
    <property type="term" value="P:negative regulation of canonical NF-kappaB signal transduction"/>
    <property type="evidence" value="ECO:0000250"/>
    <property type="project" value="UniProtKB"/>
</dbReference>
<dbReference type="GO" id="GO:0032435">
    <property type="term" value="P:negative regulation of proteasomal ubiquitin-dependent protein catabolic process"/>
    <property type="evidence" value="ECO:0000250"/>
    <property type="project" value="UniProtKB"/>
</dbReference>
<dbReference type="GO" id="GO:2000059">
    <property type="term" value="P:negative regulation of ubiquitin-dependent protein catabolic process"/>
    <property type="evidence" value="ECO:0000266"/>
    <property type="project" value="RGD"/>
</dbReference>
<dbReference type="GO" id="GO:2001235">
    <property type="term" value="P:positive regulation of apoptotic signaling pathway"/>
    <property type="evidence" value="ECO:0000266"/>
    <property type="project" value="RGD"/>
</dbReference>
<dbReference type="GO" id="GO:0050821">
    <property type="term" value="P:protein stabilization"/>
    <property type="evidence" value="ECO:0000250"/>
    <property type="project" value="UniProtKB"/>
</dbReference>
<dbReference type="GO" id="GO:0016567">
    <property type="term" value="P:protein ubiquitination"/>
    <property type="evidence" value="ECO:0007669"/>
    <property type="project" value="UniProtKB-UniPathway"/>
</dbReference>
<dbReference type="GO" id="GO:1902806">
    <property type="term" value="P:regulation of cell cycle G1/S phase transition"/>
    <property type="evidence" value="ECO:0000250"/>
    <property type="project" value="UniProtKB"/>
</dbReference>
<dbReference type="GO" id="GO:0010468">
    <property type="term" value="P:regulation of gene expression"/>
    <property type="evidence" value="ECO:0000318"/>
    <property type="project" value="GO_Central"/>
</dbReference>
<dbReference type="CDD" id="cd19780">
    <property type="entry name" value="Bbox2_TRIM39-like"/>
    <property type="match status" value="1"/>
</dbReference>
<dbReference type="CDD" id="cd16594">
    <property type="entry name" value="RING-HC_TRIM7-like_C-IV"/>
    <property type="match status" value="1"/>
</dbReference>
<dbReference type="CDD" id="cd13745">
    <property type="entry name" value="SPRY_PRY_TRIM39"/>
    <property type="match status" value="1"/>
</dbReference>
<dbReference type="FunFam" id="2.60.120.920:FF:000004">
    <property type="entry name" value="Butyrophilin subfamily 1 member A1"/>
    <property type="match status" value="1"/>
</dbReference>
<dbReference type="FunFam" id="3.30.160.60:FF:003220">
    <property type="entry name" value="E3 ubiquitin-protein ligase TRIM39"/>
    <property type="match status" value="1"/>
</dbReference>
<dbReference type="FunFam" id="3.30.40.10:FF:000171">
    <property type="entry name" value="E3 ubiquitin-protein ligase TRIM39"/>
    <property type="match status" value="1"/>
</dbReference>
<dbReference type="Gene3D" id="2.60.120.920">
    <property type="match status" value="1"/>
</dbReference>
<dbReference type="Gene3D" id="3.30.160.60">
    <property type="entry name" value="Classic Zinc Finger"/>
    <property type="match status" value="1"/>
</dbReference>
<dbReference type="Gene3D" id="3.30.40.10">
    <property type="entry name" value="Zinc/RING finger domain, C3HC4 (zinc finger)"/>
    <property type="match status" value="1"/>
</dbReference>
<dbReference type="InterPro" id="IPR001870">
    <property type="entry name" value="B30.2/SPRY"/>
</dbReference>
<dbReference type="InterPro" id="IPR043136">
    <property type="entry name" value="B30.2/SPRY_sf"/>
</dbReference>
<dbReference type="InterPro" id="IPR003879">
    <property type="entry name" value="Butyrophylin_SPRY"/>
</dbReference>
<dbReference type="InterPro" id="IPR013320">
    <property type="entry name" value="ConA-like_dom_sf"/>
</dbReference>
<dbReference type="InterPro" id="IPR006574">
    <property type="entry name" value="PRY"/>
</dbReference>
<dbReference type="InterPro" id="IPR035033">
    <property type="entry name" value="PRY/SPRY_TRIM39"/>
</dbReference>
<dbReference type="InterPro" id="IPR003877">
    <property type="entry name" value="SPRY_dom"/>
</dbReference>
<dbReference type="InterPro" id="IPR050143">
    <property type="entry name" value="TRIM/RBCC"/>
</dbReference>
<dbReference type="InterPro" id="IPR000315">
    <property type="entry name" value="Znf_B-box"/>
</dbReference>
<dbReference type="InterPro" id="IPR001841">
    <property type="entry name" value="Znf_RING"/>
</dbReference>
<dbReference type="InterPro" id="IPR013083">
    <property type="entry name" value="Znf_RING/FYVE/PHD"/>
</dbReference>
<dbReference type="InterPro" id="IPR017907">
    <property type="entry name" value="Znf_RING_CS"/>
</dbReference>
<dbReference type="PANTHER" id="PTHR24103">
    <property type="entry name" value="E3 UBIQUITIN-PROTEIN LIGASE TRIM"/>
    <property type="match status" value="1"/>
</dbReference>
<dbReference type="Pfam" id="PF13765">
    <property type="entry name" value="PRY"/>
    <property type="match status" value="1"/>
</dbReference>
<dbReference type="Pfam" id="PF00622">
    <property type="entry name" value="SPRY"/>
    <property type="match status" value="1"/>
</dbReference>
<dbReference type="Pfam" id="PF00643">
    <property type="entry name" value="zf-B_box"/>
    <property type="match status" value="1"/>
</dbReference>
<dbReference type="Pfam" id="PF15227">
    <property type="entry name" value="zf-C3HC4_4"/>
    <property type="match status" value="1"/>
</dbReference>
<dbReference type="PRINTS" id="PR01407">
    <property type="entry name" value="BUTYPHLNCDUF"/>
</dbReference>
<dbReference type="SMART" id="SM00336">
    <property type="entry name" value="BBOX"/>
    <property type="match status" value="1"/>
</dbReference>
<dbReference type="SMART" id="SM00589">
    <property type="entry name" value="PRY"/>
    <property type="match status" value="1"/>
</dbReference>
<dbReference type="SMART" id="SM00184">
    <property type="entry name" value="RING"/>
    <property type="match status" value="1"/>
</dbReference>
<dbReference type="SMART" id="SM00449">
    <property type="entry name" value="SPRY"/>
    <property type="match status" value="1"/>
</dbReference>
<dbReference type="SUPFAM" id="SSF57845">
    <property type="entry name" value="B-box zinc-binding domain"/>
    <property type="match status" value="1"/>
</dbReference>
<dbReference type="SUPFAM" id="SSF49899">
    <property type="entry name" value="Concanavalin A-like lectins/glucanases"/>
    <property type="match status" value="1"/>
</dbReference>
<dbReference type="SUPFAM" id="SSF57850">
    <property type="entry name" value="RING/U-box"/>
    <property type="match status" value="1"/>
</dbReference>
<dbReference type="PROSITE" id="PS50188">
    <property type="entry name" value="B302_SPRY"/>
    <property type="match status" value="1"/>
</dbReference>
<dbReference type="PROSITE" id="PS50119">
    <property type="entry name" value="ZF_BBOX"/>
    <property type="match status" value="1"/>
</dbReference>
<dbReference type="PROSITE" id="PS00518">
    <property type="entry name" value="ZF_RING_1"/>
    <property type="match status" value="1"/>
</dbReference>
<dbReference type="PROSITE" id="PS50089">
    <property type="entry name" value="ZF_RING_2"/>
    <property type="match status" value="1"/>
</dbReference>